<protein>
    <recommendedName>
        <fullName>GPALPP motifs-containing protein 1</fullName>
    </recommendedName>
</protein>
<sequence>MARDLIGPALPPGFKERATVEDQERDPSPVAGPALPPNYRSSSSDSSDSNEDSSSLSEEGNQESEEDDAGPTAKKQRRNQDRDDDDDDDGFFGPALPPGFKKQDDSPPRPIIGPALPPGFIKSPQKNDKGRENPGQVSPFFNSEEAESGEDEDIVGPMPAKGPVDYSVTAEFEKRAQRMKEKLTKGDDDSPKPVTRESWMTELPPEMKDFGLGPRTFKRRADDKSGDRSVWTDTPADRERKAKEIQEARKSLSKKDEENMLSGRDKRLAEQVSSYNESKRSESLMDIHHKRLKTKAAEDKNRHQERTPFDRDKDLKVNRFDEAQKKALIKKSRELNTRFSHGKGNMFL</sequence>
<organism>
    <name type="scientific">Rattus norvegicus</name>
    <name type="common">Rat</name>
    <dbReference type="NCBI Taxonomy" id="10116"/>
    <lineage>
        <taxon>Eukaryota</taxon>
        <taxon>Metazoa</taxon>
        <taxon>Chordata</taxon>
        <taxon>Craniata</taxon>
        <taxon>Vertebrata</taxon>
        <taxon>Euteleostomi</taxon>
        <taxon>Mammalia</taxon>
        <taxon>Eutheria</taxon>
        <taxon>Euarchontoglires</taxon>
        <taxon>Glires</taxon>
        <taxon>Rodentia</taxon>
        <taxon>Myomorpha</taxon>
        <taxon>Muroidea</taxon>
        <taxon>Muridae</taxon>
        <taxon>Murinae</taxon>
        <taxon>Rattus</taxon>
    </lineage>
</organism>
<keyword id="KW-0007">Acetylation</keyword>
<keyword id="KW-1017">Isopeptide bond</keyword>
<keyword id="KW-0597">Phosphoprotein</keyword>
<keyword id="KW-1185">Reference proteome</keyword>
<keyword id="KW-0832">Ubl conjugation</keyword>
<evidence type="ECO:0000250" key="1">
    <source>
        <dbReference type="UniProtKB" id="Q8IXQ4"/>
    </source>
</evidence>
<evidence type="ECO:0000256" key="2">
    <source>
        <dbReference type="SAM" id="MobiDB-lite"/>
    </source>
</evidence>
<evidence type="ECO:0007744" key="3">
    <source>
    </source>
</evidence>
<accession>Q4V893</accession>
<gene>
    <name type="primary">Gpalpp1</name>
</gene>
<name>GPAM1_RAT</name>
<feature type="initiator methionine" description="Removed" evidence="1">
    <location>
        <position position="1"/>
    </location>
</feature>
<feature type="chain" id="PRO_0000293717" description="GPALPP motifs-containing protein 1">
    <location>
        <begin position="2"/>
        <end position="348"/>
    </location>
</feature>
<feature type="region of interest" description="Disordered" evidence="2">
    <location>
        <begin position="1"/>
        <end position="163"/>
    </location>
</feature>
<feature type="region of interest" description="Disordered" evidence="2">
    <location>
        <begin position="177"/>
        <end position="317"/>
    </location>
</feature>
<feature type="short sequence motif" description="GPALPP motif 1">
    <location>
        <begin position="7"/>
        <end position="12"/>
    </location>
</feature>
<feature type="short sequence motif" description="GPALPP motif 2">
    <location>
        <begin position="32"/>
        <end position="37"/>
    </location>
</feature>
<feature type="short sequence motif" description="GPALPP motif 3">
    <location>
        <begin position="93"/>
        <end position="98"/>
    </location>
</feature>
<feature type="short sequence motif" description="GPALPP motif 4">
    <location>
        <begin position="113"/>
        <end position="118"/>
    </location>
</feature>
<feature type="compositionally biased region" description="Basic and acidic residues" evidence="2">
    <location>
        <begin position="14"/>
        <end position="27"/>
    </location>
</feature>
<feature type="compositionally biased region" description="Low complexity" evidence="2">
    <location>
        <begin position="41"/>
        <end position="59"/>
    </location>
</feature>
<feature type="compositionally biased region" description="Acidic residues" evidence="2">
    <location>
        <begin position="60"/>
        <end position="69"/>
    </location>
</feature>
<feature type="compositionally biased region" description="Pro residues" evidence="2">
    <location>
        <begin position="108"/>
        <end position="117"/>
    </location>
</feature>
<feature type="compositionally biased region" description="Acidic residues" evidence="2">
    <location>
        <begin position="144"/>
        <end position="154"/>
    </location>
</feature>
<feature type="compositionally biased region" description="Basic and acidic residues" evidence="2">
    <location>
        <begin position="177"/>
        <end position="195"/>
    </location>
</feature>
<feature type="compositionally biased region" description="Basic and acidic residues" evidence="2">
    <location>
        <begin position="235"/>
        <end position="269"/>
    </location>
</feature>
<feature type="compositionally biased region" description="Basic and acidic residues" evidence="2">
    <location>
        <begin position="277"/>
        <end position="287"/>
    </location>
</feature>
<feature type="compositionally biased region" description="Basic and acidic residues" evidence="2">
    <location>
        <begin position="295"/>
        <end position="317"/>
    </location>
</feature>
<feature type="modified residue" description="N-acetylalanine" evidence="1">
    <location>
        <position position="2"/>
    </location>
</feature>
<feature type="modified residue" description="Phosphoserine" evidence="1">
    <location>
        <position position="28"/>
    </location>
</feature>
<feature type="modified residue" description="Phosphoserine" evidence="3">
    <location>
        <position position="106"/>
    </location>
</feature>
<feature type="modified residue" description="Phosphoserine" evidence="3">
    <location>
        <position position="138"/>
    </location>
</feature>
<feature type="modified residue" description="Phosphoserine" evidence="3">
    <location>
        <position position="143"/>
    </location>
</feature>
<feature type="modified residue" description="Phosphoserine" evidence="3">
    <location>
        <position position="148"/>
    </location>
</feature>
<feature type="cross-link" description="Glycyl lysine isopeptide (Lys-Gly) (interchain with G-Cter in SUMO2)" evidence="1">
    <location>
        <position position="279"/>
    </location>
</feature>
<feature type="cross-link" description="Glycyl lysine isopeptide (Lys-Gly) (interchain with G-Cter in SUMO2)" evidence="1">
    <location>
        <position position="316"/>
    </location>
</feature>
<proteinExistence type="evidence at protein level"/>
<reference key="1">
    <citation type="journal article" date="2004" name="Genome Res.">
        <title>The status, quality, and expansion of the NIH full-length cDNA project: the Mammalian Gene Collection (MGC).</title>
        <authorList>
            <consortium name="The MGC Project Team"/>
        </authorList>
    </citation>
    <scope>NUCLEOTIDE SEQUENCE [LARGE SCALE MRNA]</scope>
    <source>
        <tissue>Placenta</tissue>
    </source>
</reference>
<reference key="2">
    <citation type="journal article" date="2012" name="Nat. Commun.">
        <title>Quantitative maps of protein phosphorylation sites across 14 different rat organs and tissues.</title>
        <authorList>
            <person name="Lundby A."/>
            <person name="Secher A."/>
            <person name="Lage K."/>
            <person name="Nordsborg N.B."/>
            <person name="Dmytriyev A."/>
            <person name="Lundby C."/>
            <person name="Olsen J.V."/>
        </authorList>
    </citation>
    <scope>PHOSPHORYLATION [LARGE SCALE ANALYSIS] AT SER-106; SER-138; SER-143 AND SER-148</scope>
    <scope>IDENTIFICATION BY MASS SPECTROMETRY [LARGE SCALE ANALYSIS]</scope>
</reference>
<dbReference type="EMBL" id="BC097485">
    <property type="protein sequence ID" value="AAH97485.1"/>
    <property type="molecule type" value="mRNA"/>
</dbReference>
<dbReference type="RefSeq" id="NP_001020046.1">
    <property type="nucleotide sequence ID" value="NM_001024875.1"/>
</dbReference>
<dbReference type="SMR" id="Q4V893"/>
<dbReference type="FunCoup" id="Q4V893">
    <property type="interactions" value="4070"/>
</dbReference>
<dbReference type="STRING" id="10116.ENSRNOP00000001371"/>
<dbReference type="iPTMnet" id="Q4V893"/>
<dbReference type="PhosphoSitePlus" id="Q4V893"/>
<dbReference type="PaxDb" id="10116-ENSRNOP00000001371"/>
<dbReference type="Ensembl" id="ENSRNOT00000001371.7">
    <property type="protein sequence ID" value="ENSRNOP00000001371.4"/>
    <property type="gene ID" value="ENSRNOG00000001037.7"/>
</dbReference>
<dbReference type="GeneID" id="298712"/>
<dbReference type="KEGG" id="rno:298712"/>
<dbReference type="UCSC" id="RGD:1307254">
    <property type="organism name" value="rat"/>
</dbReference>
<dbReference type="AGR" id="RGD:1307254"/>
<dbReference type="CTD" id="55425"/>
<dbReference type="RGD" id="1307254">
    <property type="gene designation" value="Gpalpp1"/>
</dbReference>
<dbReference type="eggNOG" id="KOG4188">
    <property type="taxonomic scope" value="Eukaryota"/>
</dbReference>
<dbReference type="GeneTree" id="ENSGT00390000012569"/>
<dbReference type="HOGENOM" id="CLU_029231_1_0_1"/>
<dbReference type="InParanoid" id="Q4V893"/>
<dbReference type="OMA" id="NKAADFG"/>
<dbReference type="OrthoDB" id="72463at9989"/>
<dbReference type="PhylomeDB" id="Q4V893"/>
<dbReference type="TreeFam" id="TF314389"/>
<dbReference type="PRO" id="PR:Q4V893"/>
<dbReference type="Proteomes" id="UP000002494">
    <property type="component" value="Chromosome 15"/>
</dbReference>
<dbReference type="Bgee" id="ENSRNOG00000001037">
    <property type="expression patterns" value="Expressed in thymus and 20 other cell types or tissues"/>
</dbReference>
<dbReference type="InterPro" id="IPR022226">
    <property type="entry name" value="DUF3752"/>
</dbReference>
<dbReference type="InterPro" id="IPR046331">
    <property type="entry name" value="GPAM1-like"/>
</dbReference>
<dbReference type="PANTHER" id="PTHR46370">
    <property type="entry name" value="GPALPP MOTIFS-CONTAINING PROTEIN 1"/>
    <property type="match status" value="1"/>
</dbReference>
<dbReference type="PANTHER" id="PTHR46370:SF1">
    <property type="entry name" value="GPALPP MOTIFS-CONTAINING PROTEIN 1"/>
    <property type="match status" value="1"/>
</dbReference>
<dbReference type="Pfam" id="PF12572">
    <property type="entry name" value="DUF3752"/>
    <property type="match status" value="1"/>
</dbReference>